<dbReference type="EC" id="3.6.4.-" evidence="1"/>
<dbReference type="EMBL" id="X65939">
    <property type="protein sequence ID" value="CAA46742.1"/>
    <property type="molecule type" value="mRNA"/>
</dbReference>
<dbReference type="PIR" id="S25545">
    <property type="entry name" value="S25545"/>
</dbReference>
<dbReference type="SMR" id="Q86484"/>
<dbReference type="Proteomes" id="UP000008175">
    <property type="component" value="Genome"/>
</dbReference>
<dbReference type="GO" id="GO:0030430">
    <property type="term" value="C:host cell cytoplasm"/>
    <property type="evidence" value="ECO:0007669"/>
    <property type="project" value="UniProtKB-SubCell"/>
</dbReference>
<dbReference type="GO" id="GO:0005524">
    <property type="term" value="F:ATP binding"/>
    <property type="evidence" value="ECO:0007669"/>
    <property type="project" value="UniProtKB-KW"/>
</dbReference>
<dbReference type="GO" id="GO:0046872">
    <property type="term" value="F:metal ion binding"/>
    <property type="evidence" value="ECO:0007669"/>
    <property type="project" value="UniProtKB-UniRule"/>
</dbReference>
<dbReference type="GO" id="GO:0004550">
    <property type="term" value="F:nucleoside diphosphate kinase activity"/>
    <property type="evidence" value="ECO:0007669"/>
    <property type="project" value="InterPro"/>
</dbReference>
<dbReference type="GO" id="GO:0017111">
    <property type="term" value="F:ribonucleoside triphosphate phosphatase activity"/>
    <property type="evidence" value="ECO:0007669"/>
    <property type="project" value="InterPro"/>
</dbReference>
<dbReference type="GO" id="GO:0003723">
    <property type="term" value="F:RNA binding"/>
    <property type="evidence" value="ECO:0007669"/>
    <property type="project" value="UniProtKB-UniRule"/>
</dbReference>
<dbReference type="GO" id="GO:0019079">
    <property type="term" value="P:viral genome replication"/>
    <property type="evidence" value="ECO:0007669"/>
    <property type="project" value="UniProtKB-UniRule"/>
</dbReference>
<dbReference type="Gene3D" id="3.30.428.20">
    <property type="entry name" value="Rotavirus NSP2 fragment, C-terminal domain"/>
    <property type="match status" value="1"/>
</dbReference>
<dbReference type="Gene3D" id="3.90.1400.10">
    <property type="entry name" value="Rotavirus NSP2 fragment, N-terminal domain"/>
    <property type="match status" value="1"/>
</dbReference>
<dbReference type="HAMAP" id="MF_04089">
    <property type="entry name" value="ROTA_NSP2"/>
    <property type="match status" value="1"/>
</dbReference>
<dbReference type="InterPro" id="IPR048306">
    <property type="entry name" value="Rota_NS35_C"/>
</dbReference>
<dbReference type="InterPro" id="IPR048573">
    <property type="entry name" value="Rota_NS35_N"/>
</dbReference>
<dbReference type="InterPro" id="IPR003668">
    <property type="entry name" value="Rotavirus_NSP2"/>
</dbReference>
<dbReference type="InterPro" id="IPR024076">
    <property type="entry name" value="Rotavirus_NSP2_C"/>
</dbReference>
<dbReference type="InterPro" id="IPR024068">
    <property type="entry name" value="Rotavirus_NSP2_N"/>
</dbReference>
<dbReference type="Pfam" id="PF02509">
    <property type="entry name" value="Rota_NS35_C"/>
    <property type="match status" value="1"/>
</dbReference>
<dbReference type="Pfam" id="PF21067">
    <property type="entry name" value="Rota_NS35_N"/>
    <property type="match status" value="1"/>
</dbReference>
<dbReference type="SUPFAM" id="SSF75347">
    <property type="entry name" value="Rotavirus NSP2 fragment, C-terminal domain"/>
    <property type="match status" value="1"/>
</dbReference>
<dbReference type="SUPFAM" id="SSF75574">
    <property type="entry name" value="Rotavirus NSP2 fragment, N-terminal domain"/>
    <property type="match status" value="1"/>
</dbReference>
<name>NSP2_ROTPC</name>
<reference key="1">
    <citation type="submission" date="1992-04" db="EMBL/GenBank/DDBJ databases">
        <title>Sequence of the gene encoding the outer glycoprotein of the bovine rotavirus (RF strain) and comparison with homologous genes from four bovine, simian and human rotaviruses.</title>
        <authorList>
            <person name="Cohen J."/>
        </authorList>
    </citation>
    <scope>NUCLEOTIDE SEQUENCE [MRNA]</scope>
</reference>
<feature type="chain" id="PRO_0000369882" description="Non-structural protein 2">
    <location>
        <begin position="1"/>
        <end position="312"/>
    </location>
</feature>
<feature type="region of interest" description="RNA-binding" evidence="1">
    <location>
        <begin position="202"/>
        <end position="238"/>
    </location>
</feature>
<feature type="active site" description="For NTPase and RTPase activities" evidence="1">
    <location>
        <position position="222"/>
    </location>
</feature>
<feature type="binding site" evidence="1">
    <location>
        <begin position="107"/>
        <end position="109"/>
    </location>
    <ligand>
        <name>ATP</name>
        <dbReference type="ChEBI" id="CHEBI:30616"/>
    </ligand>
</feature>
<feature type="binding site" evidence="1">
    <location>
        <position position="185"/>
    </location>
    <ligand>
        <name>ATP</name>
        <dbReference type="ChEBI" id="CHEBI:30616"/>
    </ligand>
</feature>
<feature type="binding site" evidence="1">
    <location>
        <begin position="218"/>
        <end position="220"/>
    </location>
    <ligand>
        <name>ATP</name>
        <dbReference type="ChEBI" id="CHEBI:30616"/>
    </ligand>
</feature>
<feature type="binding site" evidence="1">
    <location>
        <position position="224"/>
    </location>
    <ligand>
        <name>ATP</name>
        <dbReference type="ChEBI" id="CHEBI:30616"/>
    </ligand>
</feature>
<accession>Q86484</accession>
<comment type="function">
    <text evidence="1">Participates in replication and packaging of the viral genome. Plays a crucial role, together with NSP5, in the formation of virus factories (viroplasms) which are large inclusions in the host cytoplasm where replication intermediates are assembled and viral RNA replication takes place. Displays ssRNA binding, NTPase, RNA triphosphatase (RTPase) and ATP-independent helix-unwinding activities. The unwinding activity may prepare and organize plus-strand RNAs for packaging and replication by removing interfering secondary structures. The RTPase activity plays a role in the removal of the gamma-phosphate from the rotavirus RNA minus strands of dsRNA genome segments.</text>
</comment>
<comment type="cofactor">
    <cofactor evidence="1">
        <name>Mg(2+)</name>
        <dbReference type="ChEBI" id="CHEBI:18420"/>
    </cofactor>
</comment>
<comment type="subunit">
    <text evidence="1">Homooctamer. Interacts with VP1; this interaction is weak. Interacts with NSP5; this interaction leads to up-regulation of NSP5 phosphorylation and formation of viral factories.</text>
</comment>
<comment type="subcellular location">
    <subcellularLocation>
        <location evidence="1">Host cytoplasm</location>
    </subcellularLocation>
    <text evidence="1">Found in spherical cytoplasmic structures, called viral factories, that appear early after infection and are the site of viral replication and packaging.</text>
</comment>
<comment type="similarity">
    <text evidence="1">Belongs to the rotavirus NSP2 family.</text>
</comment>
<organism>
    <name type="scientific">Rotavirus C (strain RVC/Pig/United States/Cowden/1980)</name>
    <name type="common">RV-C</name>
    <dbReference type="NCBI Taxonomy" id="10916"/>
    <lineage>
        <taxon>Viruses</taxon>
        <taxon>Riboviria</taxon>
        <taxon>Orthornavirae</taxon>
        <taxon>Duplornaviricota</taxon>
        <taxon>Resentoviricetes</taxon>
        <taxon>Reovirales</taxon>
        <taxon>Sedoreoviridae</taxon>
        <taxon>Rotavirus</taxon>
        <taxon>Rotavirus C</taxon>
    </lineage>
</organism>
<evidence type="ECO:0000255" key="1">
    <source>
        <dbReference type="HAMAP-Rule" id="MF_04089"/>
    </source>
</evidence>
<sequence>MAELACFVSFSLTEDKVKWFPINKKAVKTMLCAKVEKDQRSNYYDTILYGVAPPPEFRNRFKTTERYGLDYESDQYSEVANLLADVLNMVSMPTEKFQFDIVKTVVQVRHLENLLLRIKDTDDILSENVKLRVKAVMIACNLVNETETTPLTESNEIVYQDSYFTITKLDYSSHKLLPLMADEYKITINTKTDIPDRDQTAFAAYIRYNFNKFAAISHGKRHWRLVLHSQLMSHAERLDRKIKSDKKHGRQFAYDDGDMAFVHPGWKACIGQLCGGTTFEVAKTSLYSVKTSKTVRTATNKIESDLISMVGN</sequence>
<organismHost>
    <name type="scientific">Sus scrofa</name>
    <name type="common">Pig</name>
    <dbReference type="NCBI Taxonomy" id="9823"/>
</organismHost>
<protein>
    <recommendedName>
        <fullName evidence="1">Non-structural protein 2</fullName>
        <shortName evidence="1">NSP2</shortName>
        <ecNumber evidence="1">3.6.4.-</ecNumber>
    </recommendedName>
    <alternativeName>
        <fullName evidence="1">NCVP3</fullName>
    </alternativeName>
    <alternativeName>
        <fullName evidence="1">Non-structural RNA-binding protein 35</fullName>
        <shortName evidence="1">NS35</shortName>
    </alternativeName>
</protein>
<proteinExistence type="evidence at transcript level"/>
<keyword id="KW-0067">ATP-binding</keyword>
<keyword id="KW-1035">Host cytoplasm</keyword>
<keyword id="KW-0378">Hydrolase</keyword>
<keyword id="KW-0460">Magnesium</keyword>
<keyword id="KW-0479">Metal-binding</keyword>
<keyword id="KW-0547">Nucleotide-binding</keyword>
<keyword id="KW-0694">RNA-binding</keyword>